<evidence type="ECO:0000255" key="1">
    <source>
        <dbReference type="PROSITE-ProRule" id="PRU00285"/>
    </source>
</evidence>
<evidence type="ECO:0000256" key="2">
    <source>
        <dbReference type="SAM" id="MobiDB-lite"/>
    </source>
</evidence>
<evidence type="ECO:0000305" key="3"/>
<organism>
    <name type="scientific">Stigmatella aurantiaca (strain DW4/3-1)</name>
    <dbReference type="NCBI Taxonomy" id="378806"/>
    <lineage>
        <taxon>Bacteria</taxon>
        <taxon>Pseudomonadati</taxon>
        <taxon>Myxococcota</taxon>
        <taxon>Myxococcia</taxon>
        <taxon>Myxococcales</taxon>
        <taxon>Cystobacterineae</taxon>
        <taxon>Archangiaceae</taxon>
        <taxon>Stigmatella</taxon>
    </lineage>
</organism>
<reference key="1">
    <citation type="journal article" date="1993" name="J. Bacteriol.">
        <title>Heat shock and development induce synthesis of a low-molecular-weight stress-responsive protein in the myxobacterium Stigmatella aurantiaca.</title>
        <authorList>
            <person name="Heidelbach M."/>
            <person name="Skladny H."/>
            <person name="Schairer H.U."/>
        </authorList>
    </citation>
    <scope>NUCLEOTIDE SEQUENCE [GENOMIC DNA]</scope>
    <source>
        <strain>DW4/3-1</strain>
    </source>
</reference>
<reference key="2">
    <citation type="submission" date="2006-04" db="EMBL/GenBank/DDBJ databases">
        <authorList>
            <person name="Nierman W.C."/>
        </authorList>
    </citation>
    <scope>NUCLEOTIDE SEQUENCE [LARGE SCALE GENOMIC DNA]</scope>
    <source>
        <strain>DW4/3-1</strain>
    </source>
</reference>
<reference key="3">
    <citation type="journal article" date="2011" name="Mol. Biol. Evol.">
        <title>Comparative genomic analysis of fruiting body formation in Myxococcales.</title>
        <authorList>
            <person name="Huntley S."/>
            <person name="Hamann N."/>
            <person name="Wegener-Feldbruegge S."/>
            <person name="Treuner-Lange A."/>
            <person name="Kube M."/>
            <person name="Reinhardt R."/>
            <person name="Klages S."/>
            <person name="Mueller R."/>
            <person name="Ronning C.M."/>
            <person name="Nierman W.C."/>
            <person name="Sogaard-Andersen L."/>
        </authorList>
    </citation>
    <scope>NUCLEOTIDE SEQUENCE [LARGE SCALE GENOMIC DNA]</scope>
    <source>
        <strain>DW4/3-1</strain>
    </source>
</reference>
<reference key="4">
    <citation type="journal article" date="1993" name="J. Bacteriol.">
        <title>Purification and characterization of SP21, a development-specific protein of the myxobacterium Stigmatella aurantiaca.</title>
        <authorList>
            <person name="Heidelbach M."/>
            <person name="Skladny H."/>
            <person name="Schairer H.U."/>
        </authorList>
    </citation>
    <scope>PARTIAL PROTEIN SEQUENCE</scope>
    <source>
        <strain>DW4</strain>
    </source>
</reference>
<accession>Q06823</accession>
<accession>Q08V45</accession>
<protein>
    <recommendedName>
        <fullName>Spore protein SP21</fullName>
    </recommendedName>
</protein>
<name>SP21_STIAD</name>
<dbReference type="EMBL" id="M94510">
    <property type="protein sequence ID" value="AAA16136.1"/>
    <property type="molecule type" value="Unassigned_DNA"/>
</dbReference>
<dbReference type="EMBL" id="AAMD01000121">
    <property type="protein sequence ID" value="EAU64354.1"/>
    <property type="molecule type" value="Genomic_DNA"/>
</dbReference>
<dbReference type="EMBL" id="CP002271">
    <property type="protein sequence ID" value="ADO72078.1"/>
    <property type="molecule type" value="Genomic_DNA"/>
</dbReference>
<dbReference type="PIR" id="A49942">
    <property type="entry name" value="A49942"/>
</dbReference>
<dbReference type="RefSeq" id="WP_002616692.1">
    <property type="nucleotide sequence ID" value="NC_014623.1"/>
</dbReference>
<dbReference type="SMR" id="Q06823"/>
<dbReference type="STRING" id="378806.STAUR_4298"/>
<dbReference type="KEGG" id="sur:STAUR_4298"/>
<dbReference type="eggNOG" id="COG0071">
    <property type="taxonomic scope" value="Bacteria"/>
</dbReference>
<dbReference type="HOGENOM" id="CLU_046737_12_2_7"/>
<dbReference type="OrthoDB" id="9811615at2"/>
<dbReference type="Proteomes" id="UP000001351">
    <property type="component" value="Chromosome"/>
</dbReference>
<dbReference type="Proteomes" id="UP000032702">
    <property type="component" value="Unassembled WGS sequence"/>
</dbReference>
<dbReference type="GO" id="GO:0030435">
    <property type="term" value="P:sporulation resulting in formation of a cellular spore"/>
    <property type="evidence" value="ECO:0007669"/>
    <property type="project" value="UniProtKB-KW"/>
</dbReference>
<dbReference type="CDD" id="cd06464">
    <property type="entry name" value="ACD_sHsps-like"/>
    <property type="match status" value="1"/>
</dbReference>
<dbReference type="Gene3D" id="2.60.40.790">
    <property type="match status" value="1"/>
</dbReference>
<dbReference type="InterPro" id="IPR002068">
    <property type="entry name" value="A-crystallin/Hsp20_dom"/>
</dbReference>
<dbReference type="InterPro" id="IPR008978">
    <property type="entry name" value="HSP20-like_chaperone"/>
</dbReference>
<dbReference type="InterPro" id="IPR031107">
    <property type="entry name" value="Small_HSP"/>
</dbReference>
<dbReference type="PANTHER" id="PTHR11527">
    <property type="entry name" value="HEAT-SHOCK PROTEIN 20 FAMILY MEMBER"/>
    <property type="match status" value="1"/>
</dbReference>
<dbReference type="Pfam" id="PF00011">
    <property type="entry name" value="HSP20"/>
    <property type="match status" value="1"/>
</dbReference>
<dbReference type="SUPFAM" id="SSF49764">
    <property type="entry name" value="HSP20-like chaperones"/>
    <property type="match status" value="1"/>
</dbReference>
<dbReference type="PROSITE" id="PS01031">
    <property type="entry name" value="SHSP"/>
    <property type="match status" value="1"/>
</dbReference>
<comment type="function">
    <text>May stabilize cellular components during stress and spore formation.</text>
</comment>
<comment type="developmental stage">
    <text>During fruiting and upon induced sporulation.</text>
</comment>
<comment type="induction">
    <text>By stress, such as heat shock and oxygen limitation.</text>
</comment>
<comment type="similarity">
    <text evidence="1">Belongs to the small heat shock protein (HSP20) family.</text>
</comment>
<sequence length="169" mass="19359">MADLSVRRGTGSTPQRTREWDPFQQMQELMNWDPFELANHPWFANRQGPPAFVPAFEVRETKEAYIFKADLPGVDEKDIEVTLTGDRVSVSGKREREKREESERFYAYERSFGSFSRAFTLPEGVDGDNVRADLKNGVLTLTLPKRPEVQPKRIQVASSGTEQKEHIKA</sequence>
<proteinExistence type="evidence at protein level"/>
<feature type="chain" id="PRO_0000126059" description="Spore protein SP21">
    <location>
        <begin position="1"/>
        <end position="169"/>
    </location>
</feature>
<feature type="domain" description="sHSP" evidence="1">
    <location>
        <begin position="47"/>
        <end position="159"/>
    </location>
</feature>
<feature type="region of interest" description="Disordered" evidence="2">
    <location>
        <begin position="1"/>
        <end position="21"/>
    </location>
</feature>
<feature type="region of interest" description="Disordered" evidence="2">
    <location>
        <begin position="150"/>
        <end position="169"/>
    </location>
</feature>
<feature type="sequence conflict" description="In Ref. 1; AAA16136." evidence="3" ref="1">
    <original>S</original>
    <variation>T</variation>
    <location>
        <position position="111"/>
    </location>
</feature>
<feature type="sequence conflict" description="In Ref. 1; AAA16136." evidence="3" ref="1">
    <original>A</original>
    <variation>AYPAPAEPGLAAPLGWPGFS</variation>
    <location>
        <position position="169"/>
    </location>
</feature>
<gene>
    <name type="primary">hspA</name>
    <name type="ordered locus">STAUR_4298</name>
    <name type="ORF">STIAU_6511</name>
</gene>
<keyword id="KW-0903">Direct protein sequencing</keyword>
<keyword id="KW-0749">Sporulation</keyword>
<keyword id="KW-0346">Stress response</keyword>